<reference key="1">
    <citation type="journal article" date="2008" name="Genome Res.">
        <title>Comparative genome analysis of Salmonella enteritidis PT4 and Salmonella gallinarum 287/91 provides insights into evolutionary and host adaptation pathways.</title>
        <authorList>
            <person name="Thomson N.R."/>
            <person name="Clayton D.J."/>
            <person name="Windhorst D."/>
            <person name="Vernikos G."/>
            <person name="Davidson S."/>
            <person name="Churcher C."/>
            <person name="Quail M.A."/>
            <person name="Stevens M."/>
            <person name="Jones M.A."/>
            <person name="Watson M."/>
            <person name="Barron A."/>
            <person name="Layton A."/>
            <person name="Pickard D."/>
            <person name="Kingsley R.A."/>
            <person name="Bignell A."/>
            <person name="Clark L."/>
            <person name="Harris B."/>
            <person name="Ormond D."/>
            <person name="Abdellah Z."/>
            <person name="Brooks K."/>
            <person name="Cherevach I."/>
            <person name="Chillingworth T."/>
            <person name="Woodward J."/>
            <person name="Norberczak H."/>
            <person name="Lord A."/>
            <person name="Arrowsmith C."/>
            <person name="Jagels K."/>
            <person name="Moule S."/>
            <person name="Mungall K."/>
            <person name="Saunders M."/>
            <person name="Whitehead S."/>
            <person name="Chabalgoity J.A."/>
            <person name="Maskell D."/>
            <person name="Humphreys T."/>
            <person name="Roberts M."/>
            <person name="Barrow P.A."/>
            <person name="Dougan G."/>
            <person name="Parkhill J."/>
        </authorList>
    </citation>
    <scope>NUCLEOTIDE SEQUENCE [LARGE SCALE GENOMIC DNA]</scope>
    <source>
        <strain>P125109</strain>
    </source>
</reference>
<organism>
    <name type="scientific">Salmonella enteritidis PT4 (strain P125109)</name>
    <dbReference type="NCBI Taxonomy" id="550537"/>
    <lineage>
        <taxon>Bacteria</taxon>
        <taxon>Pseudomonadati</taxon>
        <taxon>Pseudomonadota</taxon>
        <taxon>Gammaproteobacteria</taxon>
        <taxon>Enterobacterales</taxon>
        <taxon>Enterobacteriaceae</taxon>
        <taxon>Salmonella</taxon>
    </lineage>
</organism>
<accession>B5R297</accession>
<protein>
    <recommendedName>
        <fullName evidence="1">Elongation factor G</fullName>
        <shortName evidence="1">EF-G</shortName>
    </recommendedName>
</protein>
<sequence length="704" mass="77599">MARTTPIARYRNIGISAHIDAGKTTTTERILFYTGVNHKIGEVHDGAATMDWMEQEQERGITITSAATTAFWSGMAKQYEPHRINIIDTPGHVDFTIEVERSMRVLDGAVMVYCAVGGVQPQSETVWRQANKYKVPRIAFVNKMDRMGANFLKVVGQIKTRLGANPVPLQLAIGAEEGFTGVVDLVKMKAINWNDADQGVTFEYEDIPADMQDLANEWHQNLIESAAEASEELMEKYLGGEELTEEEIKQALRQRVLNNEIILVTCGSAFKNKGVQAMLDAVIDYLPSPVDVPAINGILDDGKDTPAERHASDDEPFSALAFKIATDPFVGNLTFFRVYSGVVNSGDTVLNSVKTARERFGRIVQMHANKREEIKEVRAGDIAAAIGLKDVTTGDTLCDPENPIILERMEFPEPVISIAVEPKTKADQEKMGLALGRLAKEDPSFRVWTDEESNQTIIAGMGELHLDIIVDRMKREFNVEANVGKPQVAYREAIRAKVTDIEGKHAKQSGGRGQYGHVVIDMYPLEPGSNPKGYEFINDIKGGVIPGEYIPAVDKGIQEQLKSGPLAGYPVVDLGVRLHFGSYHDVDSSELAFKLAASIAFKEGFKKAKPVLLEPIMKVEVETPEENTGDVIGDLSRRRGMLKGQESEVTGVKIHAEVPLSEMFGYATQLRSLTKGRASYTMEFLKYDDAPNNVAQAVIEARGK</sequence>
<evidence type="ECO:0000255" key="1">
    <source>
        <dbReference type="HAMAP-Rule" id="MF_00054"/>
    </source>
</evidence>
<name>EFG_SALEP</name>
<comment type="function">
    <text evidence="1">Catalyzes the GTP-dependent ribosomal translocation step during translation elongation. During this step, the ribosome changes from the pre-translocational (PRE) to the post-translocational (POST) state as the newly formed A-site-bound peptidyl-tRNA and P-site-bound deacylated tRNA move to the P and E sites, respectively. Catalyzes the coordinated movement of the two tRNA molecules, the mRNA and conformational changes in the ribosome.</text>
</comment>
<comment type="subcellular location">
    <subcellularLocation>
        <location evidence="1">Cytoplasm</location>
    </subcellularLocation>
</comment>
<comment type="similarity">
    <text evidence="1">Belongs to the TRAFAC class translation factor GTPase superfamily. Classic translation factor GTPase family. EF-G/EF-2 subfamily.</text>
</comment>
<feature type="chain" id="PRO_1000091756" description="Elongation factor G">
    <location>
        <begin position="1"/>
        <end position="704"/>
    </location>
</feature>
<feature type="domain" description="tr-type G">
    <location>
        <begin position="8"/>
        <end position="290"/>
    </location>
</feature>
<feature type="binding site" evidence="1">
    <location>
        <begin position="17"/>
        <end position="24"/>
    </location>
    <ligand>
        <name>GTP</name>
        <dbReference type="ChEBI" id="CHEBI:37565"/>
    </ligand>
</feature>
<feature type="binding site" evidence="1">
    <location>
        <begin position="88"/>
        <end position="92"/>
    </location>
    <ligand>
        <name>GTP</name>
        <dbReference type="ChEBI" id="CHEBI:37565"/>
    </ligand>
</feature>
<feature type="binding site" evidence="1">
    <location>
        <begin position="142"/>
        <end position="145"/>
    </location>
    <ligand>
        <name>GTP</name>
        <dbReference type="ChEBI" id="CHEBI:37565"/>
    </ligand>
</feature>
<keyword id="KW-0963">Cytoplasm</keyword>
<keyword id="KW-0251">Elongation factor</keyword>
<keyword id="KW-0342">GTP-binding</keyword>
<keyword id="KW-0547">Nucleotide-binding</keyword>
<keyword id="KW-0648">Protein biosynthesis</keyword>
<gene>
    <name evidence="1" type="primary">fusA</name>
    <name type="ordered locus">SEN3274</name>
</gene>
<dbReference type="EMBL" id="AM933172">
    <property type="protein sequence ID" value="CAR34849.1"/>
    <property type="molecule type" value="Genomic_DNA"/>
</dbReference>
<dbReference type="RefSeq" id="WP_000124693.1">
    <property type="nucleotide sequence ID" value="NC_011294.1"/>
</dbReference>
<dbReference type="SMR" id="B5R297"/>
<dbReference type="KEGG" id="set:SEN3274"/>
<dbReference type="HOGENOM" id="CLU_002794_4_1_6"/>
<dbReference type="Proteomes" id="UP000000613">
    <property type="component" value="Chromosome"/>
</dbReference>
<dbReference type="GO" id="GO:0005737">
    <property type="term" value="C:cytoplasm"/>
    <property type="evidence" value="ECO:0007669"/>
    <property type="project" value="UniProtKB-SubCell"/>
</dbReference>
<dbReference type="GO" id="GO:0005525">
    <property type="term" value="F:GTP binding"/>
    <property type="evidence" value="ECO:0007669"/>
    <property type="project" value="UniProtKB-UniRule"/>
</dbReference>
<dbReference type="GO" id="GO:0003924">
    <property type="term" value="F:GTPase activity"/>
    <property type="evidence" value="ECO:0007669"/>
    <property type="project" value="InterPro"/>
</dbReference>
<dbReference type="GO" id="GO:0097216">
    <property type="term" value="F:guanosine tetraphosphate binding"/>
    <property type="evidence" value="ECO:0007669"/>
    <property type="project" value="UniProtKB-ARBA"/>
</dbReference>
<dbReference type="GO" id="GO:0003746">
    <property type="term" value="F:translation elongation factor activity"/>
    <property type="evidence" value="ECO:0007669"/>
    <property type="project" value="UniProtKB-UniRule"/>
</dbReference>
<dbReference type="GO" id="GO:0032790">
    <property type="term" value="P:ribosome disassembly"/>
    <property type="evidence" value="ECO:0007669"/>
    <property type="project" value="TreeGrafter"/>
</dbReference>
<dbReference type="CDD" id="cd01886">
    <property type="entry name" value="EF-G"/>
    <property type="match status" value="1"/>
</dbReference>
<dbReference type="CDD" id="cd16262">
    <property type="entry name" value="EFG_III"/>
    <property type="match status" value="1"/>
</dbReference>
<dbReference type="CDD" id="cd01434">
    <property type="entry name" value="EFG_mtEFG1_IV"/>
    <property type="match status" value="1"/>
</dbReference>
<dbReference type="CDD" id="cd03713">
    <property type="entry name" value="EFG_mtEFG_C"/>
    <property type="match status" value="1"/>
</dbReference>
<dbReference type="CDD" id="cd04088">
    <property type="entry name" value="EFG_mtEFG_II"/>
    <property type="match status" value="1"/>
</dbReference>
<dbReference type="FunFam" id="2.40.30.10:FF:000006">
    <property type="entry name" value="Elongation factor G"/>
    <property type="match status" value="1"/>
</dbReference>
<dbReference type="FunFam" id="3.30.230.10:FF:000003">
    <property type="entry name" value="Elongation factor G"/>
    <property type="match status" value="1"/>
</dbReference>
<dbReference type="FunFam" id="3.30.70.240:FF:000001">
    <property type="entry name" value="Elongation factor G"/>
    <property type="match status" value="1"/>
</dbReference>
<dbReference type="FunFam" id="3.30.70.870:FF:000001">
    <property type="entry name" value="Elongation factor G"/>
    <property type="match status" value="1"/>
</dbReference>
<dbReference type="FunFam" id="3.40.50.300:FF:000029">
    <property type="entry name" value="Elongation factor G"/>
    <property type="match status" value="1"/>
</dbReference>
<dbReference type="Gene3D" id="3.30.230.10">
    <property type="match status" value="1"/>
</dbReference>
<dbReference type="Gene3D" id="3.30.70.240">
    <property type="match status" value="1"/>
</dbReference>
<dbReference type="Gene3D" id="3.30.70.870">
    <property type="entry name" value="Elongation Factor G (Translational Gtpase), domain 3"/>
    <property type="match status" value="1"/>
</dbReference>
<dbReference type="Gene3D" id="3.40.50.300">
    <property type="entry name" value="P-loop containing nucleotide triphosphate hydrolases"/>
    <property type="match status" value="1"/>
</dbReference>
<dbReference type="Gene3D" id="2.40.30.10">
    <property type="entry name" value="Translation factors"/>
    <property type="match status" value="1"/>
</dbReference>
<dbReference type="HAMAP" id="MF_00054_B">
    <property type="entry name" value="EF_G_EF_2_B"/>
    <property type="match status" value="1"/>
</dbReference>
<dbReference type="InterPro" id="IPR041095">
    <property type="entry name" value="EFG_II"/>
</dbReference>
<dbReference type="InterPro" id="IPR009022">
    <property type="entry name" value="EFG_III"/>
</dbReference>
<dbReference type="InterPro" id="IPR035647">
    <property type="entry name" value="EFG_III/V"/>
</dbReference>
<dbReference type="InterPro" id="IPR047872">
    <property type="entry name" value="EFG_IV"/>
</dbReference>
<dbReference type="InterPro" id="IPR035649">
    <property type="entry name" value="EFG_V"/>
</dbReference>
<dbReference type="InterPro" id="IPR000640">
    <property type="entry name" value="EFG_V-like"/>
</dbReference>
<dbReference type="InterPro" id="IPR004161">
    <property type="entry name" value="EFTu-like_2"/>
</dbReference>
<dbReference type="InterPro" id="IPR031157">
    <property type="entry name" value="G_TR_CS"/>
</dbReference>
<dbReference type="InterPro" id="IPR027417">
    <property type="entry name" value="P-loop_NTPase"/>
</dbReference>
<dbReference type="InterPro" id="IPR020568">
    <property type="entry name" value="Ribosomal_Su5_D2-typ_SF"/>
</dbReference>
<dbReference type="InterPro" id="IPR014721">
    <property type="entry name" value="Ribsml_uS5_D2-typ_fold_subgr"/>
</dbReference>
<dbReference type="InterPro" id="IPR005225">
    <property type="entry name" value="Small_GTP-bd"/>
</dbReference>
<dbReference type="InterPro" id="IPR000795">
    <property type="entry name" value="T_Tr_GTP-bd_dom"/>
</dbReference>
<dbReference type="InterPro" id="IPR009000">
    <property type="entry name" value="Transl_B-barrel_sf"/>
</dbReference>
<dbReference type="InterPro" id="IPR004540">
    <property type="entry name" value="Transl_elong_EFG/EF2"/>
</dbReference>
<dbReference type="InterPro" id="IPR005517">
    <property type="entry name" value="Transl_elong_EFG/EF2_IV"/>
</dbReference>
<dbReference type="NCBIfam" id="TIGR00484">
    <property type="entry name" value="EF-G"/>
    <property type="match status" value="1"/>
</dbReference>
<dbReference type="NCBIfam" id="NF009381">
    <property type="entry name" value="PRK12740.1-5"/>
    <property type="match status" value="1"/>
</dbReference>
<dbReference type="NCBIfam" id="TIGR00231">
    <property type="entry name" value="small_GTP"/>
    <property type="match status" value="1"/>
</dbReference>
<dbReference type="PANTHER" id="PTHR43261:SF1">
    <property type="entry name" value="RIBOSOME-RELEASING FACTOR 2, MITOCHONDRIAL"/>
    <property type="match status" value="1"/>
</dbReference>
<dbReference type="PANTHER" id="PTHR43261">
    <property type="entry name" value="TRANSLATION ELONGATION FACTOR G-RELATED"/>
    <property type="match status" value="1"/>
</dbReference>
<dbReference type="Pfam" id="PF00679">
    <property type="entry name" value="EFG_C"/>
    <property type="match status" value="1"/>
</dbReference>
<dbReference type="Pfam" id="PF14492">
    <property type="entry name" value="EFG_III"/>
    <property type="match status" value="1"/>
</dbReference>
<dbReference type="Pfam" id="PF03764">
    <property type="entry name" value="EFG_IV"/>
    <property type="match status" value="1"/>
</dbReference>
<dbReference type="Pfam" id="PF00009">
    <property type="entry name" value="GTP_EFTU"/>
    <property type="match status" value="1"/>
</dbReference>
<dbReference type="Pfam" id="PF03144">
    <property type="entry name" value="GTP_EFTU_D2"/>
    <property type="match status" value="1"/>
</dbReference>
<dbReference type="PRINTS" id="PR00315">
    <property type="entry name" value="ELONGATNFCT"/>
</dbReference>
<dbReference type="SMART" id="SM00838">
    <property type="entry name" value="EFG_C"/>
    <property type="match status" value="1"/>
</dbReference>
<dbReference type="SMART" id="SM00889">
    <property type="entry name" value="EFG_IV"/>
    <property type="match status" value="1"/>
</dbReference>
<dbReference type="SUPFAM" id="SSF54980">
    <property type="entry name" value="EF-G C-terminal domain-like"/>
    <property type="match status" value="2"/>
</dbReference>
<dbReference type="SUPFAM" id="SSF52540">
    <property type="entry name" value="P-loop containing nucleoside triphosphate hydrolases"/>
    <property type="match status" value="1"/>
</dbReference>
<dbReference type="SUPFAM" id="SSF54211">
    <property type="entry name" value="Ribosomal protein S5 domain 2-like"/>
    <property type="match status" value="1"/>
</dbReference>
<dbReference type="SUPFAM" id="SSF50447">
    <property type="entry name" value="Translation proteins"/>
    <property type="match status" value="1"/>
</dbReference>
<dbReference type="PROSITE" id="PS00301">
    <property type="entry name" value="G_TR_1"/>
    <property type="match status" value="1"/>
</dbReference>
<dbReference type="PROSITE" id="PS51722">
    <property type="entry name" value="G_TR_2"/>
    <property type="match status" value="1"/>
</dbReference>
<proteinExistence type="inferred from homology"/>